<name>TYSY_SHEB5</name>
<keyword id="KW-0963">Cytoplasm</keyword>
<keyword id="KW-0489">Methyltransferase</keyword>
<keyword id="KW-0545">Nucleotide biosynthesis</keyword>
<keyword id="KW-1185">Reference proteome</keyword>
<keyword id="KW-0808">Transferase</keyword>
<evidence type="ECO:0000255" key="1">
    <source>
        <dbReference type="HAMAP-Rule" id="MF_00008"/>
    </source>
</evidence>
<gene>
    <name evidence="1" type="primary">thyA</name>
    <name type="ordered locus">Sbal_1188</name>
</gene>
<reference key="1">
    <citation type="submission" date="2007-02" db="EMBL/GenBank/DDBJ databases">
        <title>Complete sequence of chromosome of Shewanella baltica OS155.</title>
        <authorList>
            <consortium name="US DOE Joint Genome Institute"/>
            <person name="Copeland A."/>
            <person name="Lucas S."/>
            <person name="Lapidus A."/>
            <person name="Barry K."/>
            <person name="Detter J.C."/>
            <person name="Glavina del Rio T."/>
            <person name="Hammon N."/>
            <person name="Israni S."/>
            <person name="Dalin E."/>
            <person name="Tice H."/>
            <person name="Pitluck S."/>
            <person name="Sims D.R."/>
            <person name="Brettin T."/>
            <person name="Bruce D."/>
            <person name="Han C."/>
            <person name="Tapia R."/>
            <person name="Brainard J."/>
            <person name="Schmutz J."/>
            <person name="Larimer F."/>
            <person name="Land M."/>
            <person name="Hauser L."/>
            <person name="Kyrpides N."/>
            <person name="Mikhailova N."/>
            <person name="Brettar I."/>
            <person name="Klappenbach J."/>
            <person name="Konstantinidis K."/>
            <person name="Rodrigues J."/>
            <person name="Tiedje J."/>
            <person name="Richardson P."/>
        </authorList>
    </citation>
    <scope>NUCLEOTIDE SEQUENCE [LARGE SCALE GENOMIC DNA]</scope>
    <source>
        <strain>OS155 / ATCC BAA-1091</strain>
    </source>
</reference>
<sequence>MKQYLDLMKHILAEGVDKSDRTGTGTRSVFGYQMRFDLSKGFPLVSTKKCHMRSIIHELLWFLKGETNVAYLRENKVSIWDEWADENGDLGPVYGAQWRSWPTQSGDAIDQISQVIAQIKSQPDSRRLIVSAWNVGELDKMALAPCHAFFQFYVADGKLSCQLYQRSCDVFLGLPFNIASYALLTMMVAQQCDLALGDFVWTGGDTHLYSNHMEQTALQLSREPMPLPTMTILRRPESIFDYQFDDFELTNYAPHPHIKAPVAV</sequence>
<organism>
    <name type="scientific">Shewanella baltica (strain OS155 / ATCC BAA-1091)</name>
    <dbReference type="NCBI Taxonomy" id="325240"/>
    <lineage>
        <taxon>Bacteria</taxon>
        <taxon>Pseudomonadati</taxon>
        <taxon>Pseudomonadota</taxon>
        <taxon>Gammaproteobacteria</taxon>
        <taxon>Alteromonadales</taxon>
        <taxon>Shewanellaceae</taxon>
        <taxon>Shewanella</taxon>
    </lineage>
</organism>
<feature type="chain" id="PRO_1000000668" description="Thymidylate synthase">
    <location>
        <begin position="1"/>
        <end position="264"/>
    </location>
</feature>
<feature type="active site" description="Nucleophile" evidence="1">
    <location>
        <position position="146"/>
    </location>
</feature>
<feature type="binding site" description="in other chain" evidence="1">
    <location>
        <position position="21"/>
    </location>
    <ligand>
        <name>dUMP</name>
        <dbReference type="ChEBI" id="CHEBI:246422"/>
        <note>ligand shared between dimeric partners</note>
    </ligand>
</feature>
<feature type="binding site" evidence="1">
    <location>
        <position position="51"/>
    </location>
    <ligand>
        <name>(6R)-5,10-methylene-5,6,7,8-tetrahydrofolate</name>
        <dbReference type="ChEBI" id="CHEBI:15636"/>
    </ligand>
</feature>
<feature type="binding site" evidence="1">
    <location>
        <begin position="126"/>
        <end position="127"/>
    </location>
    <ligand>
        <name>dUMP</name>
        <dbReference type="ChEBI" id="CHEBI:246422"/>
        <note>ligand shared between dimeric partners</note>
    </ligand>
</feature>
<feature type="binding site" description="in other chain" evidence="1">
    <location>
        <begin position="166"/>
        <end position="169"/>
    </location>
    <ligand>
        <name>dUMP</name>
        <dbReference type="ChEBI" id="CHEBI:246422"/>
        <note>ligand shared between dimeric partners</note>
    </ligand>
</feature>
<feature type="binding site" evidence="1">
    <location>
        <position position="169"/>
    </location>
    <ligand>
        <name>(6R)-5,10-methylene-5,6,7,8-tetrahydrofolate</name>
        <dbReference type="ChEBI" id="CHEBI:15636"/>
    </ligand>
</feature>
<feature type="binding site" description="in other chain" evidence="1">
    <location>
        <position position="177"/>
    </location>
    <ligand>
        <name>dUMP</name>
        <dbReference type="ChEBI" id="CHEBI:246422"/>
        <note>ligand shared between dimeric partners</note>
    </ligand>
</feature>
<feature type="binding site" description="in other chain" evidence="1">
    <location>
        <begin position="207"/>
        <end position="209"/>
    </location>
    <ligand>
        <name>dUMP</name>
        <dbReference type="ChEBI" id="CHEBI:246422"/>
        <note>ligand shared between dimeric partners</note>
    </ligand>
</feature>
<feature type="binding site" evidence="1">
    <location>
        <position position="263"/>
    </location>
    <ligand>
        <name>(6R)-5,10-methylene-5,6,7,8-tetrahydrofolate</name>
        <dbReference type="ChEBI" id="CHEBI:15636"/>
    </ligand>
</feature>
<comment type="function">
    <text evidence="1">Catalyzes the reductive methylation of 2'-deoxyuridine-5'-monophosphate (dUMP) to 2'-deoxythymidine-5'-monophosphate (dTMP) while utilizing 5,10-methylenetetrahydrofolate (mTHF) as the methyl donor and reductant in the reaction, yielding dihydrofolate (DHF) as a by-product. This enzymatic reaction provides an intracellular de novo source of dTMP, an essential precursor for DNA biosynthesis.</text>
</comment>
<comment type="catalytic activity">
    <reaction evidence="1">
        <text>dUMP + (6R)-5,10-methylene-5,6,7,8-tetrahydrofolate = 7,8-dihydrofolate + dTMP</text>
        <dbReference type="Rhea" id="RHEA:12104"/>
        <dbReference type="ChEBI" id="CHEBI:15636"/>
        <dbReference type="ChEBI" id="CHEBI:57451"/>
        <dbReference type="ChEBI" id="CHEBI:63528"/>
        <dbReference type="ChEBI" id="CHEBI:246422"/>
        <dbReference type="EC" id="2.1.1.45"/>
    </reaction>
</comment>
<comment type="pathway">
    <text evidence="1">Pyrimidine metabolism; dTTP biosynthesis.</text>
</comment>
<comment type="subunit">
    <text evidence="1">Homodimer.</text>
</comment>
<comment type="subcellular location">
    <subcellularLocation>
        <location evidence="1">Cytoplasm</location>
    </subcellularLocation>
</comment>
<comment type="similarity">
    <text evidence="1">Belongs to the thymidylate synthase family. Bacterial-type ThyA subfamily.</text>
</comment>
<dbReference type="EC" id="2.1.1.45" evidence="1"/>
<dbReference type="EMBL" id="CP000563">
    <property type="protein sequence ID" value="ABN60706.1"/>
    <property type="molecule type" value="Genomic_DNA"/>
</dbReference>
<dbReference type="RefSeq" id="WP_011846161.1">
    <property type="nucleotide sequence ID" value="NC_009052.1"/>
</dbReference>
<dbReference type="SMR" id="A3D1U3"/>
<dbReference type="STRING" id="325240.Sbal_1188"/>
<dbReference type="KEGG" id="sbl:Sbal_1188"/>
<dbReference type="HOGENOM" id="CLU_021669_0_0_6"/>
<dbReference type="OrthoDB" id="9774633at2"/>
<dbReference type="UniPathway" id="UPA00575"/>
<dbReference type="Proteomes" id="UP000001557">
    <property type="component" value="Chromosome"/>
</dbReference>
<dbReference type="GO" id="GO:0005829">
    <property type="term" value="C:cytosol"/>
    <property type="evidence" value="ECO:0007669"/>
    <property type="project" value="TreeGrafter"/>
</dbReference>
<dbReference type="GO" id="GO:0004799">
    <property type="term" value="F:thymidylate synthase activity"/>
    <property type="evidence" value="ECO:0007669"/>
    <property type="project" value="UniProtKB-UniRule"/>
</dbReference>
<dbReference type="GO" id="GO:0006231">
    <property type="term" value="P:dTMP biosynthetic process"/>
    <property type="evidence" value="ECO:0007669"/>
    <property type="project" value="UniProtKB-UniRule"/>
</dbReference>
<dbReference type="GO" id="GO:0006235">
    <property type="term" value="P:dTTP biosynthetic process"/>
    <property type="evidence" value="ECO:0007669"/>
    <property type="project" value="UniProtKB-UniRule"/>
</dbReference>
<dbReference type="GO" id="GO:0032259">
    <property type="term" value="P:methylation"/>
    <property type="evidence" value="ECO:0007669"/>
    <property type="project" value="UniProtKB-KW"/>
</dbReference>
<dbReference type="CDD" id="cd00351">
    <property type="entry name" value="TS_Pyrimidine_HMase"/>
    <property type="match status" value="1"/>
</dbReference>
<dbReference type="FunFam" id="3.30.572.10:FF:000001">
    <property type="entry name" value="Thymidylate synthase"/>
    <property type="match status" value="1"/>
</dbReference>
<dbReference type="Gene3D" id="3.30.572.10">
    <property type="entry name" value="Thymidylate synthase/dCMP hydroxymethylase domain"/>
    <property type="match status" value="1"/>
</dbReference>
<dbReference type="HAMAP" id="MF_00008">
    <property type="entry name" value="Thymidy_synth_bact"/>
    <property type="match status" value="1"/>
</dbReference>
<dbReference type="InterPro" id="IPR045097">
    <property type="entry name" value="Thymidate_synth/dCMP_Mease"/>
</dbReference>
<dbReference type="InterPro" id="IPR023451">
    <property type="entry name" value="Thymidate_synth/dCMP_Mease_dom"/>
</dbReference>
<dbReference type="InterPro" id="IPR036926">
    <property type="entry name" value="Thymidate_synth/dCMP_Mease_sf"/>
</dbReference>
<dbReference type="InterPro" id="IPR000398">
    <property type="entry name" value="Thymidylate_synthase"/>
</dbReference>
<dbReference type="InterPro" id="IPR020940">
    <property type="entry name" value="Thymidylate_synthase_AS"/>
</dbReference>
<dbReference type="NCBIfam" id="NF002497">
    <property type="entry name" value="PRK01827.1-3"/>
    <property type="match status" value="1"/>
</dbReference>
<dbReference type="NCBIfam" id="NF002499">
    <property type="entry name" value="PRK01827.1-5"/>
    <property type="match status" value="1"/>
</dbReference>
<dbReference type="NCBIfam" id="TIGR03284">
    <property type="entry name" value="thym_sym"/>
    <property type="match status" value="2"/>
</dbReference>
<dbReference type="PANTHER" id="PTHR11548:SF9">
    <property type="entry name" value="THYMIDYLATE SYNTHASE"/>
    <property type="match status" value="1"/>
</dbReference>
<dbReference type="PANTHER" id="PTHR11548">
    <property type="entry name" value="THYMIDYLATE SYNTHASE 1"/>
    <property type="match status" value="1"/>
</dbReference>
<dbReference type="Pfam" id="PF00303">
    <property type="entry name" value="Thymidylat_synt"/>
    <property type="match status" value="1"/>
</dbReference>
<dbReference type="PRINTS" id="PR00108">
    <property type="entry name" value="THYMDSNTHASE"/>
</dbReference>
<dbReference type="SUPFAM" id="SSF55831">
    <property type="entry name" value="Thymidylate synthase/dCMP hydroxymethylase"/>
    <property type="match status" value="1"/>
</dbReference>
<dbReference type="PROSITE" id="PS00091">
    <property type="entry name" value="THYMIDYLATE_SYNTHASE"/>
    <property type="match status" value="1"/>
</dbReference>
<proteinExistence type="inferred from homology"/>
<protein>
    <recommendedName>
        <fullName evidence="1">Thymidylate synthase</fullName>
        <shortName evidence="1">TS</shortName>
        <shortName evidence="1">TSase</shortName>
        <ecNumber evidence="1">2.1.1.45</ecNumber>
    </recommendedName>
</protein>
<accession>A3D1U3</accession>